<sequence length="855" mass="93110">MAAAAVGGRGERLSSSSPTAAAPQVDAGKYVRYTPEQVEALERVYTECPKPSSLRRQQLIRECPILSNIEPKQIKVWFQNRRCREKQRKEASRLQTVNRKLNAMNKLLMEENDRLQKQVSRLVYENGYMRTQLHNPSAATTDTSCESVVTSGQHHQQQNPAVLHPQRDANNPAGLLAIAEETLAEFMSKATGTAVEWVQMVGMKPGPDSIGIIAVSHNCSGVAARACGLVSLEPTKVAEILKDRPSWYRDCRCVDIIHVIPTGNGGTIELIYMQTYAPTTLAAPRDFWTLRYTSGLEDGSLVICERSLTQSTGGPSGPNTPNFIRAEVLPSGYLIRPCEGGGSMIYIVDHVDLDAWSVPEVLRPLYESPKILAQKMTIAALRHIRQIAHESSGEIPYGAGRQPAVFRTFSQRLSRGFNDAVSGFPDDGWSLLSSDGSEDITISVNSSPNKLVGSHVSPNPLFSTVGGGILCAKASMLLQNVPPALLVRFLREHRSEWADPGVDAYSAASLRASPYAVPGLRTSGFMGSQVILPLAHTLEHEEFLEVIRLEGHGFSHDEVLLSRDMYLLQLCSGVDENATSASAQLVFAPIDESFADDAPLLPSGFRVIPLDTKMDGPSATRTLDLASALEVGPGGASRASVEASGTCNRSVLTIAFQFSYENHLRESVAAMARSYVRAVMASVQRVAVAIAPSRLGPQIGMKHPPASPEALTLASWIGRSYRAHTGADIRWSDTEDADSPLALLWKHSDAILCCSLKPAPMFTFANNAGLDILETTLVNLQDISLEMILDDEGRKALCSEFPKIMQQGFTYLPGGVCKSSMGRQASYEQAVAWKVLSDDDAPHCLAFMLVNWTFM</sequence>
<comment type="function">
    <text evidence="1">Probable transcription factor.</text>
</comment>
<comment type="subcellular location">
    <subcellularLocation>
        <location evidence="7">Nucleus</location>
    </subcellularLocation>
</comment>
<comment type="tissue specificity">
    <text evidence="6">Expressed in seedlings, roots, stems, leaf sheaths and blades and panicles.</text>
</comment>
<comment type="similarity">
    <text evidence="7">Belongs to the HD-ZIP homeobox family. Class III subfamily.</text>
</comment>
<evidence type="ECO:0000250" key="1"/>
<evidence type="ECO:0000255" key="2"/>
<evidence type="ECO:0000255" key="3">
    <source>
        <dbReference type="PROSITE-ProRule" id="PRU00108"/>
    </source>
</evidence>
<evidence type="ECO:0000255" key="4">
    <source>
        <dbReference type="PROSITE-ProRule" id="PRU00197"/>
    </source>
</evidence>
<evidence type="ECO:0000256" key="5">
    <source>
        <dbReference type="SAM" id="MobiDB-lite"/>
    </source>
</evidence>
<evidence type="ECO:0000269" key="6">
    <source>
    </source>
</evidence>
<evidence type="ECO:0000305" key="7"/>
<proteinExistence type="evidence at transcript level"/>
<protein>
    <recommendedName>
        <fullName>Homeobox-leucine zipper protein HOX33</fullName>
    </recommendedName>
    <alternativeName>
        <fullName>HD-ZIP protein HOX33</fullName>
    </alternativeName>
    <alternativeName>
        <fullName>Homeodomain transcription factor HOX33</fullName>
    </alternativeName>
    <alternativeName>
        <fullName>OsHox33</fullName>
    </alternativeName>
</protein>
<name>HOX33_ORYSI</name>
<dbReference type="EMBL" id="CM000137">
    <property type="protein sequence ID" value="EEC69666.1"/>
    <property type="molecule type" value="Genomic_DNA"/>
</dbReference>
<dbReference type="EMBL" id="EF555552">
    <property type="protein sequence ID" value="ABQ57293.1"/>
    <property type="molecule type" value="mRNA"/>
</dbReference>
<dbReference type="SMR" id="A2ZMN9"/>
<dbReference type="STRING" id="39946.A2ZMN9"/>
<dbReference type="EnsemblPlants" id="BGIOSGA035845-TA">
    <property type="protein sequence ID" value="BGIOSGA035845-PA"/>
    <property type="gene ID" value="BGIOSGA035845"/>
</dbReference>
<dbReference type="EnsemblPlants" id="OsMH63_12G020440_01">
    <property type="protein sequence ID" value="OsMH63_12G020440_01"/>
    <property type="gene ID" value="OsMH63_12G020440"/>
</dbReference>
<dbReference type="Gramene" id="BGIOSGA035845-TA">
    <property type="protein sequence ID" value="BGIOSGA035845-PA"/>
    <property type="gene ID" value="BGIOSGA035845"/>
</dbReference>
<dbReference type="Gramene" id="OsMH63_12G020440_01">
    <property type="protein sequence ID" value="OsMH63_12G020440_01"/>
    <property type="gene ID" value="OsMH63_12G020440"/>
</dbReference>
<dbReference type="HOGENOM" id="CLU_012517_0_0_1"/>
<dbReference type="OMA" id="KHRIHTA"/>
<dbReference type="Proteomes" id="UP000007015">
    <property type="component" value="Chromosome 12"/>
</dbReference>
<dbReference type="GO" id="GO:0005634">
    <property type="term" value="C:nucleus"/>
    <property type="evidence" value="ECO:0007669"/>
    <property type="project" value="UniProtKB-SubCell"/>
</dbReference>
<dbReference type="GO" id="GO:0003677">
    <property type="term" value="F:DNA binding"/>
    <property type="evidence" value="ECO:0007669"/>
    <property type="project" value="UniProtKB-KW"/>
</dbReference>
<dbReference type="GO" id="GO:0003700">
    <property type="term" value="F:DNA-binding transcription factor activity"/>
    <property type="evidence" value="ECO:0007669"/>
    <property type="project" value="InterPro"/>
</dbReference>
<dbReference type="GO" id="GO:0008289">
    <property type="term" value="F:lipid binding"/>
    <property type="evidence" value="ECO:0007669"/>
    <property type="project" value="InterPro"/>
</dbReference>
<dbReference type="CDD" id="cd14686">
    <property type="entry name" value="bZIP"/>
    <property type="match status" value="1"/>
</dbReference>
<dbReference type="CDD" id="cd00086">
    <property type="entry name" value="homeodomain"/>
    <property type="match status" value="1"/>
</dbReference>
<dbReference type="CDD" id="cd08875">
    <property type="entry name" value="START_ArGLABRA2_like"/>
    <property type="match status" value="1"/>
</dbReference>
<dbReference type="FunFam" id="1.10.10.60:FF:000197">
    <property type="entry name" value="Homeobox-leucine zipper protein REVOLUTA"/>
    <property type="match status" value="1"/>
</dbReference>
<dbReference type="Gene3D" id="3.30.530.20">
    <property type="match status" value="1"/>
</dbReference>
<dbReference type="Gene3D" id="1.10.10.60">
    <property type="entry name" value="Homeodomain-like"/>
    <property type="match status" value="1"/>
</dbReference>
<dbReference type="InterPro" id="IPR001356">
    <property type="entry name" value="HD"/>
</dbReference>
<dbReference type="InterPro" id="IPR044830">
    <property type="entry name" value="HD-Zip_III"/>
</dbReference>
<dbReference type="InterPro" id="IPR009057">
    <property type="entry name" value="Homeodomain-like_sf"/>
</dbReference>
<dbReference type="InterPro" id="IPR013978">
    <property type="entry name" value="MEKHLA"/>
</dbReference>
<dbReference type="InterPro" id="IPR023393">
    <property type="entry name" value="START-like_dom_sf"/>
</dbReference>
<dbReference type="InterPro" id="IPR002913">
    <property type="entry name" value="START_lipid-bd_dom"/>
</dbReference>
<dbReference type="PANTHER" id="PTHR45950">
    <property type="entry name" value="HOMEOBOX-LEUCINE ZIPPER PROTEIN ATHB-14"/>
    <property type="match status" value="1"/>
</dbReference>
<dbReference type="PANTHER" id="PTHR45950:SF3">
    <property type="entry name" value="HOMEOBOX-LEUCINE ZIPPER PROTEIN HOX33"/>
    <property type="match status" value="1"/>
</dbReference>
<dbReference type="Pfam" id="PF00046">
    <property type="entry name" value="Homeodomain"/>
    <property type="match status" value="1"/>
</dbReference>
<dbReference type="Pfam" id="PF08670">
    <property type="entry name" value="MEKHLA"/>
    <property type="match status" value="1"/>
</dbReference>
<dbReference type="Pfam" id="PF01852">
    <property type="entry name" value="START"/>
    <property type="match status" value="1"/>
</dbReference>
<dbReference type="SMART" id="SM00389">
    <property type="entry name" value="HOX"/>
    <property type="match status" value="1"/>
</dbReference>
<dbReference type="SMART" id="SM00234">
    <property type="entry name" value="START"/>
    <property type="match status" value="1"/>
</dbReference>
<dbReference type="SUPFAM" id="SSF55961">
    <property type="entry name" value="Bet v1-like"/>
    <property type="match status" value="2"/>
</dbReference>
<dbReference type="SUPFAM" id="SSF46689">
    <property type="entry name" value="Homeodomain-like"/>
    <property type="match status" value="1"/>
</dbReference>
<dbReference type="PROSITE" id="PS50071">
    <property type="entry name" value="HOMEOBOX_2"/>
    <property type="match status" value="1"/>
</dbReference>
<dbReference type="PROSITE" id="PS50848">
    <property type="entry name" value="START"/>
    <property type="match status" value="1"/>
</dbReference>
<reference key="1">
    <citation type="journal article" date="2005" name="PLoS Biol.">
        <title>The genomes of Oryza sativa: a history of duplications.</title>
        <authorList>
            <person name="Yu J."/>
            <person name="Wang J."/>
            <person name="Lin W."/>
            <person name="Li S."/>
            <person name="Li H."/>
            <person name="Zhou J."/>
            <person name="Ni P."/>
            <person name="Dong W."/>
            <person name="Hu S."/>
            <person name="Zeng C."/>
            <person name="Zhang J."/>
            <person name="Zhang Y."/>
            <person name="Li R."/>
            <person name="Xu Z."/>
            <person name="Li S."/>
            <person name="Li X."/>
            <person name="Zheng H."/>
            <person name="Cong L."/>
            <person name="Lin L."/>
            <person name="Yin J."/>
            <person name="Geng J."/>
            <person name="Li G."/>
            <person name="Shi J."/>
            <person name="Liu J."/>
            <person name="Lv H."/>
            <person name="Li J."/>
            <person name="Wang J."/>
            <person name="Deng Y."/>
            <person name="Ran L."/>
            <person name="Shi X."/>
            <person name="Wang X."/>
            <person name="Wu Q."/>
            <person name="Li C."/>
            <person name="Ren X."/>
            <person name="Wang J."/>
            <person name="Wang X."/>
            <person name="Li D."/>
            <person name="Liu D."/>
            <person name="Zhang X."/>
            <person name="Ji Z."/>
            <person name="Zhao W."/>
            <person name="Sun Y."/>
            <person name="Zhang Z."/>
            <person name="Bao J."/>
            <person name="Han Y."/>
            <person name="Dong L."/>
            <person name="Ji J."/>
            <person name="Chen P."/>
            <person name="Wu S."/>
            <person name="Liu J."/>
            <person name="Xiao Y."/>
            <person name="Bu D."/>
            <person name="Tan J."/>
            <person name="Yang L."/>
            <person name="Ye C."/>
            <person name="Zhang J."/>
            <person name="Xu J."/>
            <person name="Zhou Y."/>
            <person name="Yu Y."/>
            <person name="Zhang B."/>
            <person name="Zhuang S."/>
            <person name="Wei H."/>
            <person name="Liu B."/>
            <person name="Lei M."/>
            <person name="Yu H."/>
            <person name="Li Y."/>
            <person name="Xu H."/>
            <person name="Wei S."/>
            <person name="He X."/>
            <person name="Fang L."/>
            <person name="Zhang Z."/>
            <person name="Zhang Y."/>
            <person name="Huang X."/>
            <person name="Su Z."/>
            <person name="Tong W."/>
            <person name="Li J."/>
            <person name="Tong Z."/>
            <person name="Li S."/>
            <person name="Ye J."/>
            <person name="Wang L."/>
            <person name="Fang L."/>
            <person name="Lei T."/>
            <person name="Chen C.-S."/>
            <person name="Chen H.-C."/>
            <person name="Xu Z."/>
            <person name="Li H."/>
            <person name="Huang H."/>
            <person name="Zhang F."/>
            <person name="Xu H."/>
            <person name="Li N."/>
            <person name="Zhao C."/>
            <person name="Li S."/>
            <person name="Dong L."/>
            <person name="Huang Y."/>
            <person name="Li L."/>
            <person name="Xi Y."/>
            <person name="Qi Q."/>
            <person name="Li W."/>
            <person name="Zhang B."/>
            <person name="Hu W."/>
            <person name="Zhang Y."/>
            <person name="Tian X."/>
            <person name="Jiao Y."/>
            <person name="Liang X."/>
            <person name="Jin J."/>
            <person name="Gao L."/>
            <person name="Zheng W."/>
            <person name="Hao B."/>
            <person name="Liu S.-M."/>
            <person name="Wang W."/>
            <person name="Yuan L."/>
            <person name="Cao M."/>
            <person name="McDermott J."/>
            <person name="Samudrala R."/>
            <person name="Wang J."/>
            <person name="Wong G.K.-S."/>
            <person name="Yang H."/>
        </authorList>
    </citation>
    <scope>NUCLEOTIDE SEQUENCE [LARGE SCALE GENOMIC DNA]</scope>
    <source>
        <strain>cv. 93-11</strain>
    </source>
</reference>
<reference key="2">
    <citation type="journal article" date="2008" name="Plant Mol. Biol.">
        <title>A genome-wide survey of HD-Zip genes in rice and analysis of drought-responsive family members.</title>
        <authorList>
            <person name="Agalou A."/>
            <person name="Purwantomo S."/>
            <person name="Oevernaes E."/>
            <person name="Johannesson H."/>
            <person name="Zhu X."/>
            <person name="Estiati A."/>
            <person name="de Kam R.J."/>
            <person name="Engstroem P."/>
            <person name="Slamet-Loedin I.H."/>
            <person name="Zhu Z."/>
            <person name="Wang M."/>
            <person name="Xiong L."/>
            <person name="Meijer A.H."/>
            <person name="Ouwerkerk P.B.F."/>
        </authorList>
    </citation>
    <scope>NUCLEOTIDE SEQUENCE [MRNA] OF 429-534</scope>
    <scope>TISSUE SPECIFICITY</scope>
    <scope>GENE FAMILY</scope>
    <scope>NOMENCLATURE</scope>
    <source>
        <strain>cv. Minghui 86</strain>
    </source>
</reference>
<organism>
    <name type="scientific">Oryza sativa subsp. indica</name>
    <name type="common">Rice</name>
    <dbReference type="NCBI Taxonomy" id="39946"/>
    <lineage>
        <taxon>Eukaryota</taxon>
        <taxon>Viridiplantae</taxon>
        <taxon>Streptophyta</taxon>
        <taxon>Embryophyta</taxon>
        <taxon>Tracheophyta</taxon>
        <taxon>Spermatophyta</taxon>
        <taxon>Magnoliopsida</taxon>
        <taxon>Liliopsida</taxon>
        <taxon>Poales</taxon>
        <taxon>Poaceae</taxon>
        <taxon>BOP clade</taxon>
        <taxon>Oryzoideae</taxon>
        <taxon>Oryzeae</taxon>
        <taxon>Oryzinae</taxon>
        <taxon>Oryza</taxon>
        <taxon>Oryza sativa</taxon>
    </lineage>
</organism>
<accession>A2ZMN9</accession>
<accession>A5JPW7</accession>
<accession>B8BMZ5</accession>
<gene>
    <name type="primary">HOX33</name>
    <name type="ORF">OsI_39093</name>
</gene>
<feature type="chain" id="PRO_0000331733" description="Homeobox-leucine zipper protein HOX33">
    <location>
        <begin position="1"/>
        <end position="855"/>
    </location>
</feature>
<feature type="domain" description="START" evidence="4">
    <location>
        <begin position="168"/>
        <end position="390"/>
    </location>
</feature>
<feature type="DNA-binding region" description="Homeobox" evidence="3">
    <location>
        <begin position="26"/>
        <end position="89"/>
    </location>
</feature>
<feature type="region of interest" description="Disordered" evidence="5">
    <location>
        <begin position="1"/>
        <end position="21"/>
    </location>
</feature>
<feature type="coiled-coil region" evidence="2">
    <location>
        <begin position="84"/>
        <end position="126"/>
    </location>
</feature>
<keyword id="KW-0175">Coiled coil</keyword>
<keyword id="KW-0238">DNA-binding</keyword>
<keyword id="KW-0371">Homeobox</keyword>
<keyword id="KW-0539">Nucleus</keyword>
<keyword id="KW-1185">Reference proteome</keyword>
<keyword id="KW-0804">Transcription</keyword>
<keyword id="KW-0805">Transcription regulation</keyword>